<name>CTPP3_YEAST</name>
<keyword id="KW-1003">Cell membrane</keyword>
<keyword id="KW-0449">Lipoprotein</keyword>
<keyword id="KW-0472">Membrane</keyword>
<keyword id="KW-1185">Reference proteome</keyword>
<proteinExistence type="evidence at protein level"/>
<gene>
    <name evidence="5" type="primary">CPP3</name>
    <name type="ordered locus">YDR034W-B</name>
</gene>
<sequence>MRHHQNMHYAPQQQPVYVQQPPPRRESGGCCRTCCHFLCCLCLINLCCDVF</sequence>
<protein>
    <recommendedName>
        <fullName evidence="6">Lipid-anchored plasma membrane protein CPP3</fullName>
    </recommendedName>
    <alternativeName>
        <fullName evidence="5">C-terminally palmitoylated protein CPP3</fullName>
    </alternativeName>
    <alternativeName>
        <fullName evidence="6">Cysteine-rich protein CPP3</fullName>
    </alternativeName>
</protein>
<accession>Q6Q5X2</accession>
<accession>D6VS22</accession>
<feature type="chain" id="PRO_0000242623" description="Lipid-anchored plasma membrane protein CPP3">
    <location>
        <begin position="1"/>
        <end position="51"/>
    </location>
</feature>
<feature type="region of interest" description="Disordered" evidence="1">
    <location>
        <begin position="1"/>
        <end position="28"/>
    </location>
</feature>
<reference key="1">
    <citation type="journal article" date="1997" name="Nature">
        <title>The nucleotide sequence of Saccharomyces cerevisiae chromosome IV.</title>
        <authorList>
            <person name="Jacq C."/>
            <person name="Alt-Moerbe J."/>
            <person name="Andre B."/>
            <person name="Arnold W."/>
            <person name="Bahr A."/>
            <person name="Ballesta J.P.G."/>
            <person name="Bargues M."/>
            <person name="Baron L."/>
            <person name="Becker A."/>
            <person name="Biteau N."/>
            <person name="Bloecker H."/>
            <person name="Blugeon C."/>
            <person name="Boskovic J."/>
            <person name="Brandt P."/>
            <person name="Brueckner M."/>
            <person name="Buitrago M.J."/>
            <person name="Coster F."/>
            <person name="Delaveau T."/>
            <person name="del Rey F."/>
            <person name="Dujon B."/>
            <person name="Eide L.G."/>
            <person name="Garcia-Cantalejo J.M."/>
            <person name="Goffeau A."/>
            <person name="Gomez-Peris A."/>
            <person name="Granotier C."/>
            <person name="Hanemann V."/>
            <person name="Hankeln T."/>
            <person name="Hoheisel J.D."/>
            <person name="Jaeger W."/>
            <person name="Jimenez A."/>
            <person name="Jonniaux J.-L."/>
            <person name="Kraemer C."/>
            <person name="Kuester H."/>
            <person name="Laamanen P."/>
            <person name="Legros Y."/>
            <person name="Louis E.J."/>
            <person name="Moeller-Rieker S."/>
            <person name="Monnet A."/>
            <person name="Moro M."/>
            <person name="Mueller-Auer S."/>
            <person name="Nussbaumer B."/>
            <person name="Paricio N."/>
            <person name="Paulin L."/>
            <person name="Perea J."/>
            <person name="Perez-Alonso M."/>
            <person name="Perez-Ortin J.E."/>
            <person name="Pohl T.M."/>
            <person name="Prydz H."/>
            <person name="Purnelle B."/>
            <person name="Rasmussen S.W."/>
            <person name="Remacha M.A."/>
            <person name="Revuelta J.L."/>
            <person name="Rieger M."/>
            <person name="Salom D."/>
            <person name="Saluz H.P."/>
            <person name="Saiz J.E."/>
            <person name="Saren A.-M."/>
            <person name="Schaefer M."/>
            <person name="Scharfe M."/>
            <person name="Schmidt E.R."/>
            <person name="Schneider C."/>
            <person name="Scholler P."/>
            <person name="Schwarz S."/>
            <person name="Soler-Mira A."/>
            <person name="Urrestarazu L.A."/>
            <person name="Verhasselt P."/>
            <person name="Vissers S."/>
            <person name="Voet M."/>
            <person name="Volckaert G."/>
            <person name="Wagner G."/>
            <person name="Wambutt R."/>
            <person name="Wedler E."/>
            <person name="Wedler H."/>
            <person name="Woelfl S."/>
            <person name="Harris D.E."/>
            <person name="Bowman S."/>
            <person name="Brown D."/>
            <person name="Churcher C.M."/>
            <person name="Connor R."/>
            <person name="Dedman K."/>
            <person name="Gentles S."/>
            <person name="Hamlin N."/>
            <person name="Hunt S."/>
            <person name="Jones L."/>
            <person name="McDonald S."/>
            <person name="Murphy L.D."/>
            <person name="Niblett D."/>
            <person name="Odell C."/>
            <person name="Oliver K."/>
            <person name="Rajandream M.A."/>
            <person name="Richards C."/>
            <person name="Shore L."/>
            <person name="Walsh S.V."/>
            <person name="Barrell B.G."/>
            <person name="Dietrich F.S."/>
            <person name="Mulligan J.T."/>
            <person name="Allen E."/>
            <person name="Araujo R."/>
            <person name="Aviles E."/>
            <person name="Berno A."/>
            <person name="Carpenter J."/>
            <person name="Chen E."/>
            <person name="Cherry J.M."/>
            <person name="Chung E."/>
            <person name="Duncan M."/>
            <person name="Hunicke-Smith S."/>
            <person name="Hyman R.W."/>
            <person name="Komp C."/>
            <person name="Lashkari D."/>
            <person name="Lew H."/>
            <person name="Lin D."/>
            <person name="Mosedale D."/>
            <person name="Nakahara K."/>
            <person name="Namath A."/>
            <person name="Oefner P."/>
            <person name="Oh C."/>
            <person name="Petel F.X."/>
            <person name="Roberts D."/>
            <person name="Schramm S."/>
            <person name="Schroeder M."/>
            <person name="Shogren T."/>
            <person name="Shroff N."/>
            <person name="Winant A."/>
            <person name="Yelton M.A."/>
            <person name="Botstein D."/>
            <person name="Davis R.W."/>
            <person name="Johnston M."/>
            <person name="Andrews S."/>
            <person name="Brinkman R."/>
            <person name="Cooper J."/>
            <person name="Ding H."/>
            <person name="Du Z."/>
            <person name="Favello A."/>
            <person name="Fulton L."/>
            <person name="Gattung S."/>
            <person name="Greco T."/>
            <person name="Hallsworth K."/>
            <person name="Hawkins J."/>
            <person name="Hillier L.W."/>
            <person name="Jier M."/>
            <person name="Johnson D."/>
            <person name="Johnston L."/>
            <person name="Kirsten J."/>
            <person name="Kucaba T."/>
            <person name="Langston Y."/>
            <person name="Latreille P."/>
            <person name="Le T."/>
            <person name="Mardis E."/>
            <person name="Menezes S."/>
            <person name="Miller N."/>
            <person name="Nhan M."/>
            <person name="Pauley A."/>
            <person name="Peluso D."/>
            <person name="Rifkin L."/>
            <person name="Riles L."/>
            <person name="Taich A."/>
            <person name="Trevaskis E."/>
            <person name="Vignati D."/>
            <person name="Wilcox L."/>
            <person name="Wohldman P."/>
            <person name="Vaudin M."/>
            <person name="Wilson R."/>
            <person name="Waterston R."/>
            <person name="Albermann K."/>
            <person name="Hani J."/>
            <person name="Heumann K."/>
            <person name="Kleine K."/>
            <person name="Mewes H.-W."/>
            <person name="Zollner A."/>
            <person name="Zaccaria P."/>
        </authorList>
    </citation>
    <scope>NUCLEOTIDE SEQUENCE [LARGE SCALE GENOMIC DNA]</scope>
    <source>
        <strain>ATCC 204508 / S288c</strain>
    </source>
</reference>
<reference key="2">
    <citation type="journal article" date="2014" name="G3 (Bethesda)">
        <title>The reference genome sequence of Saccharomyces cerevisiae: Then and now.</title>
        <authorList>
            <person name="Engel S.R."/>
            <person name="Dietrich F.S."/>
            <person name="Fisk D.G."/>
            <person name="Binkley G."/>
            <person name="Balakrishnan R."/>
            <person name="Costanzo M.C."/>
            <person name="Dwight S.S."/>
            <person name="Hitz B.C."/>
            <person name="Karra K."/>
            <person name="Nash R.S."/>
            <person name="Weng S."/>
            <person name="Wong E.D."/>
            <person name="Lloyd P."/>
            <person name="Skrzypek M.S."/>
            <person name="Miyasato S.R."/>
            <person name="Simison M."/>
            <person name="Cherry J.M."/>
        </authorList>
    </citation>
    <scope>GENOME REANNOTATION</scope>
    <source>
        <strain>ATCC 204508 / S288c</strain>
    </source>
</reference>
<reference key="3">
    <citation type="journal article" date="2007" name="Genome Res.">
        <title>Approaching a complete repository of sequence-verified protein-encoding clones for Saccharomyces cerevisiae.</title>
        <authorList>
            <person name="Hu Y."/>
            <person name="Rolfs A."/>
            <person name="Bhullar B."/>
            <person name="Murthy T.V.S."/>
            <person name="Zhu C."/>
            <person name="Berger M.F."/>
            <person name="Camargo A.A."/>
            <person name="Kelley F."/>
            <person name="McCarron S."/>
            <person name="Jepson D."/>
            <person name="Richardson A."/>
            <person name="Raphael J."/>
            <person name="Moreira D."/>
            <person name="Taycher E."/>
            <person name="Zuo D."/>
            <person name="Mohr S."/>
            <person name="Kane M.F."/>
            <person name="Williamson J."/>
            <person name="Simpson A.J.G."/>
            <person name="Bulyk M.L."/>
            <person name="Harlow E."/>
            <person name="Marsischky G."/>
            <person name="Kolodner R.D."/>
            <person name="LaBaer J."/>
        </authorList>
    </citation>
    <scope>NUCLEOTIDE SEQUENCE [GENOMIC DNA]</scope>
    <source>
        <strain>ATCC 204508 / S288c</strain>
    </source>
</reference>
<reference key="4">
    <citation type="journal article" date="2003" name="Nature">
        <title>Global analysis of protein localization in budding yeast.</title>
        <authorList>
            <person name="Huh W.-K."/>
            <person name="Falvo J.V."/>
            <person name="Gerke L.C."/>
            <person name="Carroll A.S."/>
            <person name="Howson R.W."/>
            <person name="Weissman J.S."/>
            <person name="O'Shea E.K."/>
        </authorList>
    </citation>
    <scope>SUBCELLULAR LOCATION [LARGE SCALE ANALYSIS]</scope>
</reference>
<reference key="5">
    <citation type="journal article" date="2003" name="Nature">
        <title>Global analysis of protein expression in yeast.</title>
        <authorList>
            <person name="Ghaemmaghami S."/>
            <person name="Huh W.-K."/>
            <person name="Bower K."/>
            <person name="Howson R.W."/>
            <person name="Belle A."/>
            <person name="Dephoure N."/>
            <person name="O'Shea E.K."/>
            <person name="Weissman J.S."/>
        </authorList>
    </citation>
    <scope>LEVEL OF PROTEIN EXPRESSION [LARGE SCALE ANALYSIS]</scope>
</reference>
<reference key="6">
    <citation type="journal article" date="2024" name="J. Biol. Chem.">
        <title>Palmitoylation of CYSTM (CYSPD) proteins in yeast.</title>
        <authorList>
            <person name="Giolito M.L."/>
            <person name="Bigliani G."/>
            <person name="Meinero R."/>
            <person name="Taubas J.V."/>
        </authorList>
    </citation>
    <scope>SUBCELLULAR LOCATION</scope>
    <scope>PALMITOYLATION</scope>
</reference>
<dbReference type="EMBL" id="Z68196">
    <property type="status" value="NOT_ANNOTATED_CDS"/>
    <property type="molecule type" value="Genomic_DNA"/>
</dbReference>
<dbReference type="EMBL" id="Z74330">
    <property type="status" value="NOT_ANNOTATED_CDS"/>
    <property type="molecule type" value="Genomic_DNA"/>
</dbReference>
<dbReference type="EMBL" id="Z74331">
    <property type="status" value="NOT_ANNOTATED_CDS"/>
    <property type="molecule type" value="Genomic_DNA"/>
</dbReference>
<dbReference type="EMBL" id="AY557634">
    <property type="protein sequence ID" value="AAS55960.1"/>
    <property type="molecule type" value="Genomic_DNA"/>
</dbReference>
<dbReference type="EMBL" id="BK006938">
    <property type="protein sequence ID" value="DAA11882.1"/>
    <property type="molecule type" value="Genomic_DNA"/>
</dbReference>
<dbReference type="RefSeq" id="NP_010319.3">
    <property type="nucleotide sequence ID" value="NM_001184327.3"/>
</dbReference>
<dbReference type="BioGRID" id="32089">
    <property type="interactions" value="29"/>
</dbReference>
<dbReference type="FunCoup" id="Q6Q5X2">
    <property type="interactions" value="64"/>
</dbReference>
<dbReference type="IntAct" id="Q6Q5X2">
    <property type="interactions" value="2"/>
</dbReference>
<dbReference type="MINT" id="Q6Q5X2"/>
<dbReference type="STRING" id="4932.YDR034W-B"/>
<dbReference type="PaxDb" id="4932-YDR034W-B"/>
<dbReference type="PeptideAtlas" id="Q6Q5X2"/>
<dbReference type="EnsemblFungi" id="YDR034W-B_mRNA">
    <property type="protein sequence ID" value="YDR034W-B"/>
    <property type="gene ID" value="YDR034W-B"/>
</dbReference>
<dbReference type="GeneID" id="851604"/>
<dbReference type="KEGG" id="sce:YDR034W-B"/>
<dbReference type="AGR" id="SGD:S000007234"/>
<dbReference type="SGD" id="S000007234">
    <property type="gene designation" value="CPP3"/>
</dbReference>
<dbReference type="VEuPathDB" id="FungiDB:YDR034W-B"/>
<dbReference type="HOGENOM" id="CLU_156676_1_1_1"/>
<dbReference type="InParanoid" id="Q6Q5X2"/>
<dbReference type="OMA" id="FCKILIC"/>
<dbReference type="BioCyc" id="YEAST:G3O-30087-MONOMER"/>
<dbReference type="BioGRID-ORCS" id="851604">
    <property type="hits" value="1 hit in 10 CRISPR screens"/>
</dbReference>
<dbReference type="PRO" id="PR:Q6Q5X2"/>
<dbReference type="Proteomes" id="UP000002311">
    <property type="component" value="Chromosome IV"/>
</dbReference>
<dbReference type="RNAct" id="Q6Q5X2">
    <property type="molecule type" value="protein"/>
</dbReference>
<dbReference type="GO" id="GO:0071944">
    <property type="term" value="C:cell periphery"/>
    <property type="evidence" value="ECO:0000314"/>
    <property type="project" value="SGD"/>
</dbReference>
<dbReference type="GO" id="GO:0005886">
    <property type="term" value="C:plasma membrane"/>
    <property type="evidence" value="ECO:0000314"/>
    <property type="project" value="SGD"/>
</dbReference>
<dbReference type="GO" id="GO:0005774">
    <property type="term" value="C:vacuolar membrane"/>
    <property type="evidence" value="ECO:0000314"/>
    <property type="project" value="SGD"/>
</dbReference>
<dbReference type="InterPro" id="IPR028144">
    <property type="entry name" value="CYSTM_dom"/>
</dbReference>
<dbReference type="Pfam" id="PF12734">
    <property type="entry name" value="CYSTM"/>
    <property type="match status" value="1"/>
</dbReference>
<evidence type="ECO:0000256" key="1">
    <source>
        <dbReference type="SAM" id="MobiDB-lite"/>
    </source>
</evidence>
<evidence type="ECO:0000269" key="2">
    <source>
    </source>
</evidence>
<evidence type="ECO:0000269" key="3">
    <source>
    </source>
</evidence>
<evidence type="ECO:0000269" key="4">
    <source>
    </source>
</evidence>
<evidence type="ECO:0000303" key="5">
    <source>
    </source>
</evidence>
<evidence type="ECO:0000305" key="6"/>
<evidence type="ECO:0000305" key="7">
    <source>
    </source>
</evidence>
<comment type="subcellular location">
    <subcellularLocation>
        <location evidence="2 4">Cell membrane</location>
        <topology evidence="4">Lipid-anchor</topology>
    </subcellularLocation>
    <text evidence="4">Localization is partially skewed towards the growing bud, and this localization pattern is dependent on endocytosis and polarized secretion.</text>
</comment>
<comment type="PTM">
    <text evidence="4">Palmitoylated near the C-terminus.</text>
</comment>
<comment type="miscellaneous">
    <text evidence="3">Present with 861 molecules/cell in log phase SD medium.</text>
</comment>
<comment type="similarity">
    <text evidence="6">Belongs to the CYSTM1 family.</text>
</comment>
<comment type="caution">
    <text evidence="7">Was predicted to contain a transmembrane helix, however experiments suggest that this region of the protein is not buried in the plasma membrane and is palmitoylated.</text>
</comment>
<organism>
    <name type="scientific">Saccharomyces cerevisiae (strain ATCC 204508 / S288c)</name>
    <name type="common">Baker's yeast</name>
    <dbReference type="NCBI Taxonomy" id="559292"/>
    <lineage>
        <taxon>Eukaryota</taxon>
        <taxon>Fungi</taxon>
        <taxon>Dikarya</taxon>
        <taxon>Ascomycota</taxon>
        <taxon>Saccharomycotina</taxon>
        <taxon>Saccharomycetes</taxon>
        <taxon>Saccharomycetales</taxon>
        <taxon>Saccharomycetaceae</taxon>
        <taxon>Saccharomyces</taxon>
    </lineage>
</organism>